<feature type="chain" id="PRO_1000099320" description="Bis(5'-nucleosyl)-tetraphosphatase, symmetrical">
    <location>
        <begin position="1"/>
        <end position="291"/>
    </location>
</feature>
<proteinExistence type="inferred from homology"/>
<protein>
    <recommendedName>
        <fullName evidence="1">Bis(5'-nucleosyl)-tetraphosphatase, symmetrical</fullName>
        <ecNumber evidence="1">3.6.1.41</ecNumber>
    </recommendedName>
    <alternativeName>
        <fullName evidence="1">Ap4A hydrolase</fullName>
    </alternativeName>
    <alternativeName>
        <fullName evidence="1">Diadenosine 5',5'''-P1,P4-tetraphosphate pyrophosphohydrolase</fullName>
    </alternativeName>
    <alternativeName>
        <fullName evidence="1">Diadenosine tetraphosphatase</fullName>
    </alternativeName>
</protein>
<accession>B6J3B1</accession>
<comment type="function">
    <text evidence="1">Hydrolyzes diadenosine 5',5'''-P1,P4-tetraphosphate to yield ADP.</text>
</comment>
<comment type="catalytic activity">
    <reaction evidence="1">
        <text>P(1),P(4)-bis(5'-adenosyl) tetraphosphate + H2O = 2 ADP + 2 H(+)</text>
        <dbReference type="Rhea" id="RHEA:24252"/>
        <dbReference type="ChEBI" id="CHEBI:15377"/>
        <dbReference type="ChEBI" id="CHEBI:15378"/>
        <dbReference type="ChEBI" id="CHEBI:58141"/>
        <dbReference type="ChEBI" id="CHEBI:456216"/>
        <dbReference type="EC" id="3.6.1.41"/>
    </reaction>
</comment>
<comment type="similarity">
    <text evidence="1">Belongs to the Ap4A hydrolase family.</text>
</comment>
<name>APAH_COXB2</name>
<reference key="1">
    <citation type="journal article" date="2009" name="Infect. Immun.">
        <title>Comparative genomics reveal extensive transposon-mediated genomic plasticity and diversity among potential effector proteins within the genus Coxiella.</title>
        <authorList>
            <person name="Beare P.A."/>
            <person name="Unsworth N."/>
            <person name="Andoh M."/>
            <person name="Voth D.E."/>
            <person name="Omsland A."/>
            <person name="Gilk S.D."/>
            <person name="Williams K.P."/>
            <person name="Sobral B.W."/>
            <person name="Kupko J.J. III"/>
            <person name="Porcella S.F."/>
            <person name="Samuel J.E."/>
            <person name="Heinzen R.A."/>
        </authorList>
    </citation>
    <scope>NUCLEOTIDE SEQUENCE [LARGE SCALE GENOMIC DNA]</scope>
    <source>
        <strain>CbuG_Q212</strain>
    </source>
</reference>
<keyword id="KW-0378">Hydrolase</keyword>
<evidence type="ECO:0000255" key="1">
    <source>
        <dbReference type="HAMAP-Rule" id="MF_00199"/>
    </source>
</evidence>
<organism>
    <name type="scientific">Coxiella burnetii (strain CbuG_Q212)</name>
    <name type="common">Coxiella burnetii (strain Q212)</name>
    <dbReference type="NCBI Taxonomy" id="434923"/>
    <lineage>
        <taxon>Bacteria</taxon>
        <taxon>Pseudomonadati</taxon>
        <taxon>Pseudomonadota</taxon>
        <taxon>Gammaproteobacteria</taxon>
        <taxon>Legionellales</taxon>
        <taxon>Coxiellaceae</taxon>
        <taxon>Coxiella</taxon>
    </lineage>
</organism>
<sequence>MDARAINSREKADLKYPRNTYIIGDVQGCYRELQELLELIQFDSTKDRLGFVGDLVNRGPNSLEVLRFLKSLSSPLIVLGNHDLYLLILGYGLMPEDSYEHTLHAVLQAPDKLELLEWLRHCPLIRYEKSLSAVLVHAGLPPQWNIKESILHAEEISTALKGPHYLAFLKNLFGNEPSQWKEDLEGQDRLRYICNAFTRMRFCDAKGHLDLESEGKTNQAPSRFRPWFEWRNPQEDNVDIVFGHWAALNGQSSAPHTHALDTGCAWGYKLTAINLKTKERFSVPWQSALRM</sequence>
<dbReference type="EC" id="3.6.1.41" evidence="1"/>
<dbReference type="EMBL" id="CP001019">
    <property type="protein sequence ID" value="ACJ19236.1"/>
    <property type="molecule type" value="Genomic_DNA"/>
</dbReference>
<dbReference type="RefSeq" id="WP_012570511.1">
    <property type="nucleotide sequence ID" value="NC_011527.1"/>
</dbReference>
<dbReference type="SMR" id="B6J3B1"/>
<dbReference type="KEGG" id="cbg:CbuG_1994"/>
<dbReference type="HOGENOM" id="CLU_056184_2_0_6"/>
<dbReference type="GO" id="GO:0008803">
    <property type="term" value="F:bis(5'-nucleosyl)-tetraphosphatase (symmetrical) activity"/>
    <property type="evidence" value="ECO:0007669"/>
    <property type="project" value="UniProtKB-UniRule"/>
</dbReference>
<dbReference type="CDD" id="cd07422">
    <property type="entry name" value="MPP_ApaH"/>
    <property type="match status" value="1"/>
</dbReference>
<dbReference type="Gene3D" id="3.60.21.10">
    <property type="match status" value="1"/>
</dbReference>
<dbReference type="HAMAP" id="MF_00199">
    <property type="entry name" value="ApaH"/>
    <property type="match status" value="1"/>
</dbReference>
<dbReference type="InterPro" id="IPR004617">
    <property type="entry name" value="ApaH"/>
</dbReference>
<dbReference type="InterPro" id="IPR004843">
    <property type="entry name" value="Calcineurin-like_PHP_ApaH"/>
</dbReference>
<dbReference type="InterPro" id="IPR029052">
    <property type="entry name" value="Metallo-depent_PP-like"/>
</dbReference>
<dbReference type="NCBIfam" id="TIGR00668">
    <property type="entry name" value="apaH"/>
    <property type="match status" value="1"/>
</dbReference>
<dbReference type="NCBIfam" id="NF001204">
    <property type="entry name" value="PRK00166.1"/>
    <property type="match status" value="1"/>
</dbReference>
<dbReference type="PANTHER" id="PTHR40942">
    <property type="match status" value="1"/>
</dbReference>
<dbReference type="PANTHER" id="PTHR40942:SF4">
    <property type="entry name" value="CYTOCHROME C5"/>
    <property type="match status" value="1"/>
</dbReference>
<dbReference type="Pfam" id="PF00149">
    <property type="entry name" value="Metallophos"/>
    <property type="match status" value="1"/>
</dbReference>
<dbReference type="PIRSF" id="PIRSF000903">
    <property type="entry name" value="B5n-ttraPtase_sm"/>
    <property type="match status" value="1"/>
</dbReference>
<dbReference type="SUPFAM" id="SSF56300">
    <property type="entry name" value="Metallo-dependent phosphatases"/>
    <property type="match status" value="1"/>
</dbReference>
<gene>
    <name evidence="1" type="primary">apaH</name>
    <name type="ordered locus">CbuG_1994</name>
</gene>